<name>GPDA_TRYBB</name>
<accession>P90593</accession>
<sequence length="354" mass="37783">MVSGVTYLKRGAVFGSGAFGTALACVLAKKCESVSVWHMNANEARVVNQKHENVYFLPGAPLPANLTFTADAEECAKGAEIVLFVIPTQFLRGFLQKNSHILRNHVVSRNVPVVMCSKGIERSSLLFPAQILEEFLPNYPIGVIAGPSFAIEVAKGMLTNVCTAAADINMARKIQRIMTTSDGSFRCWATTDVIGCEIASAMKNVLAIASGALKGLGTENNARAALISRGLLEIRDLTLALGGTGEAVFGLPGLGDLLLTCSSELSRNFTVGMKLGQGISLEEIKRTSKAVAEGVATAEPLERLAKKHNADLPICHEVYNVLYANGCAKRSFKKLNSCKLADEGLPALPRTSKM</sequence>
<protein>
    <recommendedName>
        <fullName>Glycerol-3-phosphate dehydrogenase [NAD(+)], glycosomal</fullName>
        <ecNumber>1.1.1.8</ecNumber>
    </recommendedName>
</protein>
<dbReference type="EC" id="1.1.1.8"/>
<dbReference type="EMBL" id="X89738">
    <property type="protein sequence ID" value="CAA61890.1"/>
    <property type="molecule type" value="Genomic_DNA"/>
</dbReference>
<dbReference type="PIR" id="T48649">
    <property type="entry name" value="T48649"/>
</dbReference>
<dbReference type="SMR" id="P90593"/>
<dbReference type="SwissPalm" id="P90593"/>
<dbReference type="GO" id="GO:0005829">
    <property type="term" value="C:cytosol"/>
    <property type="evidence" value="ECO:0007669"/>
    <property type="project" value="TreeGrafter"/>
</dbReference>
<dbReference type="GO" id="GO:0020015">
    <property type="term" value="C:glycosome"/>
    <property type="evidence" value="ECO:0007669"/>
    <property type="project" value="UniProtKB-SubCell"/>
</dbReference>
<dbReference type="GO" id="GO:0141152">
    <property type="term" value="F:glycerol-3-phosphate dehydrogenase (NAD+) activity"/>
    <property type="evidence" value="ECO:0007669"/>
    <property type="project" value="UniProtKB-EC"/>
</dbReference>
<dbReference type="GO" id="GO:0051287">
    <property type="term" value="F:NAD binding"/>
    <property type="evidence" value="ECO:0007669"/>
    <property type="project" value="InterPro"/>
</dbReference>
<dbReference type="GO" id="GO:0042803">
    <property type="term" value="F:protein homodimerization activity"/>
    <property type="evidence" value="ECO:0007669"/>
    <property type="project" value="InterPro"/>
</dbReference>
<dbReference type="GO" id="GO:0005975">
    <property type="term" value="P:carbohydrate metabolic process"/>
    <property type="evidence" value="ECO:0007669"/>
    <property type="project" value="InterPro"/>
</dbReference>
<dbReference type="GO" id="GO:0046168">
    <property type="term" value="P:glycerol-3-phosphate catabolic process"/>
    <property type="evidence" value="ECO:0007669"/>
    <property type="project" value="InterPro"/>
</dbReference>
<dbReference type="FunFam" id="1.10.1040.10:FF:000001">
    <property type="entry name" value="Glycerol-3-phosphate dehydrogenase [NAD(P)+]"/>
    <property type="match status" value="1"/>
</dbReference>
<dbReference type="FunFam" id="3.40.50.720:FF:000019">
    <property type="entry name" value="Glycerol-3-phosphate dehydrogenase [NAD(P)+]"/>
    <property type="match status" value="1"/>
</dbReference>
<dbReference type="Gene3D" id="1.10.1040.10">
    <property type="entry name" value="N-(1-d-carboxylethyl)-l-norvaline Dehydrogenase, domain 2"/>
    <property type="match status" value="1"/>
</dbReference>
<dbReference type="Gene3D" id="3.40.50.720">
    <property type="entry name" value="NAD(P)-binding Rossmann-like Domain"/>
    <property type="match status" value="1"/>
</dbReference>
<dbReference type="HAMAP" id="MF_00394">
    <property type="entry name" value="NAD_Glyc3P_dehydrog"/>
    <property type="match status" value="1"/>
</dbReference>
<dbReference type="InterPro" id="IPR008927">
    <property type="entry name" value="6-PGluconate_DH-like_C_sf"/>
</dbReference>
<dbReference type="InterPro" id="IPR013328">
    <property type="entry name" value="6PGD_dom2"/>
</dbReference>
<dbReference type="InterPro" id="IPR006168">
    <property type="entry name" value="G3P_DH_NAD-dep"/>
</dbReference>
<dbReference type="InterPro" id="IPR006109">
    <property type="entry name" value="G3P_DH_NAD-dep_C"/>
</dbReference>
<dbReference type="InterPro" id="IPR017751">
    <property type="entry name" value="G3P_DH_NAD-dep_euk"/>
</dbReference>
<dbReference type="InterPro" id="IPR011128">
    <property type="entry name" value="G3P_DH_NAD-dep_N"/>
</dbReference>
<dbReference type="InterPro" id="IPR036291">
    <property type="entry name" value="NAD(P)-bd_dom_sf"/>
</dbReference>
<dbReference type="NCBIfam" id="TIGR03376">
    <property type="entry name" value="glycerol3P_DH"/>
    <property type="match status" value="1"/>
</dbReference>
<dbReference type="NCBIfam" id="NF000940">
    <property type="entry name" value="PRK00094.1-2"/>
    <property type="match status" value="1"/>
</dbReference>
<dbReference type="NCBIfam" id="NF000942">
    <property type="entry name" value="PRK00094.1-4"/>
    <property type="match status" value="1"/>
</dbReference>
<dbReference type="PANTHER" id="PTHR11728">
    <property type="entry name" value="GLYCEROL-3-PHOSPHATE DEHYDROGENASE"/>
    <property type="match status" value="1"/>
</dbReference>
<dbReference type="PANTHER" id="PTHR11728:SF1">
    <property type="entry name" value="GLYCEROL-3-PHOSPHATE DEHYDROGENASE [NAD(+)] 2, CHLOROPLASTIC"/>
    <property type="match status" value="1"/>
</dbReference>
<dbReference type="Pfam" id="PF07479">
    <property type="entry name" value="NAD_Gly3P_dh_C"/>
    <property type="match status" value="1"/>
</dbReference>
<dbReference type="Pfam" id="PF01210">
    <property type="entry name" value="NAD_Gly3P_dh_N"/>
    <property type="match status" value="1"/>
</dbReference>
<dbReference type="PIRSF" id="PIRSF000114">
    <property type="entry name" value="Glycerol-3-P_dh"/>
    <property type="match status" value="1"/>
</dbReference>
<dbReference type="PRINTS" id="PR00077">
    <property type="entry name" value="GPDHDRGNASE"/>
</dbReference>
<dbReference type="SUPFAM" id="SSF48179">
    <property type="entry name" value="6-phosphogluconate dehydrogenase C-terminal domain-like"/>
    <property type="match status" value="1"/>
</dbReference>
<dbReference type="SUPFAM" id="SSF51735">
    <property type="entry name" value="NAD(P)-binding Rossmann-fold domains"/>
    <property type="match status" value="1"/>
</dbReference>
<dbReference type="PROSITE" id="PS00957">
    <property type="entry name" value="NAD_G3PDH"/>
    <property type="match status" value="1"/>
</dbReference>
<comment type="catalytic activity">
    <reaction>
        <text>sn-glycerol 3-phosphate + NAD(+) = dihydroxyacetone phosphate + NADH + H(+)</text>
        <dbReference type="Rhea" id="RHEA:11092"/>
        <dbReference type="ChEBI" id="CHEBI:15378"/>
        <dbReference type="ChEBI" id="CHEBI:57540"/>
        <dbReference type="ChEBI" id="CHEBI:57597"/>
        <dbReference type="ChEBI" id="CHEBI:57642"/>
        <dbReference type="ChEBI" id="CHEBI:57945"/>
        <dbReference type="EC" id="1.1.1.8"/>
    </reaction>
</comment>
<comment type="subcellular location">
    <subcellularLocation>
        <location>Glycosome</location>
    </subcellularLocation>
</comment>
<comment type="similarity">
    <text evidence="3">Belongs to the NAD-dependent glycerol-3-phosphate dehydrogenase family.</text>
</comment>
<proteinExistence type="inferred from homology"/>
<gene>
    <name type="primary">GPD</name>
</gene>
<feature type="chain" id="PRO_0000138083" description="Glycerol-3-phosphate dehydrogenase [NAD(+)], glycosomal">
    <location>
        <begin position="1"/>
        <end position="354"/>
    </location>
</feature>
<feature type="short sequence motif" description="Microbody targeting signal" evidence="2">
    <location>
        <begin position="352"/>
        <end position="354"/>
    </location>
</feature>
<feature type="active site" description="Proton acceptor" evidence="1">
    <location>
        <position position="203"/>
    </location>
</feature>
<feature type="binding site" evidence="1">
    <location>
        <begin position="15"/>
        <end position="20"/>
    </location>
    <ligand>
        <name>NAD(+)</name>
        <dbReference type="ChEBI" id="CHEBI:57540"/>
    </ligand>
</feature>
<feature type="binding site" evidence="1">
    <location>
        <position position="90"/>
    </location>
    <ligand>
        <name>NAD(+)</name>
        <dbReference type="ChEBI" id="CHEBI:57540"/>
    </ligand>
</feature>
<feature type="binding site" evidence="1">
    <location>
        <position position="118"/>
    </location>
    <ligand>
        <name>NAD(+)</name>
        <dbReference type="ChEBI" id="CHEBI:57540"/>
    </ligand>
</feature>
<feature type="binding site" evidence="1">
    <location>
        <position position="118"/>
    </location>
    <ligand>
        <name>substrate</name>
    </ligand>
</feature>
<feature type="binding site" evidence="1">
    <location>
        <position position="150"/>
    </location>
    <ligand>
        <name>NAD(+)</name>
        <dbReference type="ChEBI" id="CHEBI:57540"/>
    </ligand>
</feature>
<feature type="binding site" evidence="1">
    <location>
        <begin position="267"/>
        <end position="268"/>
    </location>
    <ligand>
        <name>substrate</name>
    </ligand>
</feature>
<feature type="binding site" evidence="1">
    <location>
        <position position="267"/>
    </location>
    <ligand>
        <name>NAD(+)</name>
        <dbReference type="ChEBI" id="CHEBI:57540"/>
    </ligand>
</feature>
<feature type="binding site" evidence="1">
    <location>
        <position position="293"/>
    </location>
    <ligand>
        <name>NAD(+)</name>
        <dbReference type="ChEBI" id="CHEBI:57540"/>
    </ligand>
</feature>
<organism>
    <name type="scientific">Trypanosoma brucei brucei</name>
    <dbReference type="NCBI Taxonomy" id="5702"/>
    <lineage>
        <taxon>Eukaryota</taxon>
        <taxon>Discoba</taxon>
        <taxon>Euglenozoa</taxon>
        <taxon>Kinetoplastea</taxon>
        <taxon>Metakinetoplastina</taxon>
        <taxon>Trypanosomatida</taxon>
        <taxon>Trypanosomatidae</taxon>
        <taxon>Trypanosoma</taxon>
    </lineage>
</organism>
<keyword id="KW-0327">Glycosome</keyword>
<keyword id="KW-0520">NAD</keyword>
<keyword id="KW-0560">Oxidoreductase</keyword>
<keyword id="KW-0576">Peroxisome</keyword>
<reference key="1">
    <citation type="journal article" date="1996" name="Mol. Biochem. Parasitol.">
        <title>Cloning and characterization of the NAD-linked glycerol-3-phosphate dehydrogenases of Trypanosoma brucei brucei and Leishmania mexicana mexicana and expression of the trypanosome enzyme in Escherichia coli.</title>
        <authorList>
            <person name="Kohl L."/>
            <person name="Drmota T."/>
            <person name="Thi C.-D."/>
            <person name="Callens M."/>
            <person name="van Beeumen J."/>
            <person name="Opperdoes F.R."/>
            <person name="Michels P.A.M."/>
        </authorList>
    </citation>
    <scope>NUCLEOTIDE SEQUENCE [GENOMIC DNA]</scope>
    <source>
        <strain>427</strain>
    </source>
</reference>
<evidence type="ECO:0000250" key="1"/>
<evidence type="ECO:0000255" key="2"/>
<evidence type="ECO:0000305" key="3"/>